<feature type="chain" id="PRO_0000318699" description="Inactive peptidyl-prolyl cis-trans isomerase FKBP6">
    <location>
        <begin position="1"/>
        <end position="326"/>
    </location>
</feature>
<feature type="domain" description="PPIase FKBP-type" evidence="4">
    <location>
        <begin position="53"/>
        <end position="142"/>
    </location>
</feature>
<feature type="repeat" description="TPR 1">
    <location>
        <begin position="170"/>
        <end position="203"/>
    </location>
</feature>
<feature type="repeat" description="TPR 2">
    <location>
        <begin position="218"/>
        <end position="251"/>
    </location>
</feature>
<feature type="repeat" description="TPR 3">
    <location>
        <begin position="252"/>
        <end position="285"/>
    </location>
</feature>
<sequence>MSSSRPLNGLSRLDAEDRSPYQRLSQRMLDISGDRGVLKDVIREGAGELVTPDASVLVKYSGYLEHMDKPFDSNCFRKTPRLMKLGEDITLWGMELGLLSMRRGELARFLFKPTYAYGTLGCPPLIPPNTTVLFEIELLDFLDSAESDKFCALSAEQQSQFPLQKVLKVAATEREFGNYLFRQNRFYDAKVRYKRALLLLHRRTAPPEEQHLVETAKLLVFLNLSFTYLKLERPTMALRYGEQALIIDRKNAKALFRCGQACLLMTEYQKARDFLVRAQREQPFNHDINNELKKLASYYRDYMDKEREMCHRMFASGDNGSTVGEN</sequence>
<accession>A6QQ71</accession>
<evidence type="ECO:0000250" key="1"/>
<evidence type="ECO:0000250" key="2">
    <source>
        <dbReference type="UniProtKB" id="O75344"/>
    </source>
</evidence>
<evidence type="ECO:0000250" key="3">
    <source>
        <dbReference type="UniProtKB" id="Q91XW8"/>
    </source>
</evidence>
<evidence type="ECO:0000255" key="4">
    <source>
        <dbReference type="PROSITE-ProRule" id="PRU00277"/>
    </source>
</evidence>
<evidence type="ECO:0000305" key="5"/>
<keyword id="KW-0963">Cytoplasm</keyword>
<keyword id="KW-0221">Differentiation</keyword>
<keyword id="KW-0469">Meiosis</keyword>
<keyword id="KW-0539">Nucleus</keyword>
<keyword id="KW-1185">Reference proteome</keyword>
<keyword id="KW-0677">Repeat</keyword>
<keyword id="KW-0943">RNA-mediated gene silencing</keyword>
<keyword id="KW-0744">Spermatogenesis</keyword>
<keyword id="KW-0802">TPR repeat</keyword>
<proteinExistence type="evidence at transcript level"/>
<gene>
    <name type="primary">FKBP6</name>
    <name type="synonym">FKBP36</name>
</gene>
<organism>
    <name type="scientific">Bos taurus</name>
    <name type="common">Bovine</name>
    <dbReference type="NCBI Taxonomy" id="9913"/>
    <lineage>
        <taxon>Eukaryota</taxon>
        <taxon>Metazoa</taxon>
        <taxon>Chordata</taxon>
        <taxon>Craniata</taxon>
        <taxon>Vertebrata</taxon>
        <taxon>Euteleostomi</taxon>
        <taxon>Mammalia</taxon>
        <taxon>Eutheria</taxon>
        <taxon>Laurasiatheria</taxon>
        <taxon>Artiodactyla</taxon>
        <taxon>Ruminantia</taxon>
        <taxon>Pecora</taxon>
        <taxon>Bovidae</taxon>
        <taxon>Bovinae</taxon>
        <taxon>Bos</taxon>
    </lineage>
</organism>
<comment type="function">
    <text evidence="1">Co-chaperone required during spermatogenesis to repress transposable elements and prevent their mobilization, which is essential for the germline integrity. Acts via the piRNA metabolic process, which mediates the repression of transposable elements during meiosis by forming complexes composed of piRNAs and Piwi proteins and govern the methylation and subsequent repression of transposons. Acts as a co-chaperone via its interaction with HSP90 and is required for the piRNA amplification process, the secondary piRNA biogenesis. May be required together with HSP90 in removal of 16 nucleotide ping-pong by-products from Piwi complexes, possibly facilitating turnover of Piwi complexes (By similarity).</text>
</comment>
<comment type="subunit">
    <text evidence="1">Interacts with HSP72/HSPA2 and CLTC. Interacts with GAPDH; leading to inhibit GAPDH catalytic activity. Interacts (via TPR repeats) with HSP90 (By similarity).</text>
</comment>
<comment type="subcellular location">
    <subcellularLocation>
        <location evidence="2 3">Cytoplasm</location>
        <location evidence="2 3">Cytosol</location>
    </subcellularLocation>
    <subcellularLocation>
        <location evidence="2 3">Nucleus</location>
    </subcellularLocation>
</comment>
<comment type="similarity">
    <text evidence="5">Belongs to the FKBP6 family.</text>
</comment>
<comment type="caution">
    <text evidence="5">Although it contains a PPIase FKBP-type domain, does not show peptidyl-prolyl cis-trans isomerase activity.</text>
</comment>
<reference key="1">
    <citation type="submission" date="2007-07" db="EMBL/GenBank/DDBJ databases">
        <authorList>
            <consortium name="NIH - Mammalian Gene Collection (MGC) project"/>
        </authorList>
    </citation>
    <scope>NUCLEOTIDE SEQUENCE [LARGE SCALE MRNA]</scope>
    <source>
        <strain>Crossbred X Angus</strain>
        <tissue>Liver</tissue>
    </source>
</reference>
<name>FKBP6_BOVIN</name>
<protein>
    <recommendedName>
        <fullName>Inactive peptidyl-prolyl cis-trans isomerase FKBP6</fullName>
        <shortName>Inactive PPIase FKBP6</shortName>
    </recommendedName>
    <alternativeName>
        <fullName>36 kDa FK506-binding protein</fullName>
    </alternativeName>
    <alternativeName>
        <fullName>FK506-binding protein 6</fullName>
        <shortName>FKBP-6</shortName>
    </alternativeName>
    <alternativeName>
        <fullName>Immunophilin FKBP36</fullName>
    </alternativeName>
</protein>
<dbReference type="EMBL" id="BC149679">
    <property type="protein sequence ID" value="AAI49680.1"/>
    <property type="molecule type" value="mRNA"/>
</dbReference>
<dbReference type="RefSeq" id="NP_001095679.1">
    <property type="nucleotide sequence ID" value="NM_001102209.1"/>
</dbReference>
<dbReference type="SMR" id="A6QQ71"/>
<dbReference type="FunCoup" id="A6QQ71">
    <property type="interactions" value="51"/>
</dbReference>
<dbReference type="STRING" id="9913.ENSBTAP00000002909"/>
<dbReference type="PaxDb" id="9913-ENSBTAP00000002909"/>
<dbReference type="GeneID" id="537921"/>
<dbReference type="KEGG" id="bta:537921"/>
<dbReference type="CTD" id="8468"/>
<dbReference type="VEuPathDB" id="HostDB:ENSBTAG00000002253"/>
<dbReference type="eggNOG" id="KOG0543">
    <property type="taxonomic scope" value="Eukaryota"/>
</dbReference>
<dbReference type="HOGENOM" id="CLU_013615_13_2_1"/>
<dbReference type="InParanoid" id="A6QQ71"/>
<dbReference type="OMA" id="CHRMFTP"/>
<dbReference type="OrthoDB" id="8116123at2759"/>
<dbReference type="TreeFam" id="TF354214"/>
<dbReference type="Proteomes" id="UP000009136">
    <property type="component" value="Chromosome 25"/>
</dbReference>
<dbReference type="Bgee" id="ENSBTAG00000002253">
    <property type="expression patterns" value="Expressed in spermatocyte and 49 other cell types or tissues"/>
</dbReference>
<dbReference type="GO" id="GO:0005737">
    <property type="term" value="C:cytoplasm"/>
    <property type="evidence" value="ECO:0000250"/>
    <property type="project" value="UniProtKB"/>
</dbReference>
<dbReference type="GO" id="GO:0005829">
    <property type="term" value="C:cytosol"/>
    <property type="evidence" value="ECO:0000250"/>
    <property type="project" value="UniProtKB"/>
</dbReference>
<dbReference type="GO" id="GO:0000795">
    <property type="term" value="C:synaptonemal complex"/>
    <property type="evidence" value="ECO:0000250"/>
    <property type="project" value="UniProtKB"/>
</dbReference>
<dbReference type="GO" id="GO:0051879">
    <property type="term" value="F:Hsp90 protein binding"/>
    <property type="evidence" value="ECO:0000250"/>
    <property type="project" value="UniProtKB"/>
</dbReference>
<dbReference type="GO" id="GO:0030154">
    <property type="term" value="P:cell differentiation"/>
    <property type="evidence" value="ECO:0007669"/>
    <property type="project" value="UniProtKB-KW"/>
</dbReference>
<dbReference type="GO" id="GO:0051321">
    <property type="term" value="P:meiotic cell cycle"/>
    <property type="evidence" value="ECO:0000250"/>
    <property type="project" value="UniProtKB"/>
</dbReference>
<dbReference type="GO" id="GO:0034587">
    <property type="term" value="P:piRNA processing"/>
    <property type="evidence" value="ECO:0000250"/>
    <property type="project" value="UniProtKB"/>
</dbReference>
<dbReference type="GO" id="GO:0006457">
    <property type="term" value="P:protein folding"/>
    <property type="evidence" value="ECO:0000250"/>
    <property type="project" value="UniProtKB"/>
</dbReference>
<dbReference type="GO" id="GO:0031047">
    <property type="term" value="P:regulatory ncRNA-mediated gene silencing"/>
    <property type="evidence" value="ECO:0000250"/>
    <property type="project" value="UniProtKB"/>
</dbReference>
<dbReference type="GO" id="GO:0007283">
    <property type="term" value="P:spermatogenesis"/>
    <property type="evidence" value="ECO:0000250"/>
    <property type="project" value="UniProtKB"/>
</dbReference>
<dbReference type="GO" id="GO:0141196">
    <property type="term" value="P:transposable element silencing by piRNA-mediated DNA methylation"/>
    <property type="evidence" value="ECO:0000250"/>
    <property type="project" value="UniProtKB"/>
</dbReference>
<dbReference type="FunFam" id="1.25.40.10:FF:000160">
    <property type="entry name" value="Peptidylprolyl isomerase"/>
    <property type="match status" value="1"/>
</dbReference>
<dbReference type="FunFam" id="3.10.50.40:FF:000030">
    <property type="entry name" value="Peptidylprolyl isomerase"/>
    <property type="match status" value="1"/>
</dbReference>
<dbReference type="Gene3D" id="3.10.50.40">
    <property type="match status" value="1"/>
</dbReference>
<dbReference type="Gene3D" id="1.25.40.10">
    <property type="entry name" value="Tetratricopeptide repeat domain"/>
    <property type="match status" value="1"/>
</dbReference>
<dbReference type="InterPro" id="IPR042282">
    <property type="entry name" value="FKBP6/shu"/>
</dbReference>
<dbReference type="InterPro" id="IPR046357">
    <property type="entry name" value="PPIase_dom_sf"/>
</dbReference>
<dbReference type="InterPro" id="IPR001179">
    <property type="entry name" value="PPIase_FKBP_dom"/>
</dbReference>
<dbReference type="InterPro" id="IPR011990">
    <property type="entry name" value="TPR-like_helical_dom_sf"/>
</dbReference>
<dbReference type="InterPro" id="IPR019734">
    <property type="entry name" value="TPR_rpt"/>
</dbReference>
<dbReference type="PANTHER" id="PTHR46674">
    <property type="entry name" value="INACTIVE PEPTIDYL-PROLYL CIS-TRANS ISOMERASE FKBP6"/>
    <property type="match status" value="1"/>
</dbReference>
<dbReference type="PANTHER" id="PTHR46674:SF1">
    <property type="entry name" value="INACTIVE PEPTIDYL-PROLYL CIS-TRANS ISOMERASE FKBP6"/>
    <property type="match status" value="1"/>
</dbReference>
<dbReference type="Pfam" id="PF00254">
    <property type="entry name" value="FKBP_C"/>
    <property type="match status" value="1"/>
</dbReference>
<dbReference type="SMART" id="SM00028">
    <property type="entry name" value="TPR"/>
    <property type="match status" value="3"/>
</dbReference>
<dbReference type="SUPFAM" id="SSF54534">
    <property type="entry name" value="FKBP-like"/>
    <property type="match status" value="1"/>
</dbReference>
<dbReference type="SUPFAM" id="SSF48452">
    <property type="entry name" value="TPR-like"/>
    <property type="match status" value="1"/>
</dbReference>
<dbReference type="PROSITE" id="PS50059">
    <property type="entry name" value="FKBP_PPIASE"/>
    <property type="match status" value="1"/>
</dbReference>
<dbReference type="PROSITE" id="PS50293">
    <property type="entry name" value="TPR_REGION"/>
    <property type="match status" value="1"/>
</dbReference>